<organism>
    <name type="scientific">Schizosaccharomyces pombe (strain 972 / ATCC 24843)</name>
    <name type="common">Fission yeast</name>
    <dbReference type="NCBI Taxonomy" id="284812"/>
    <lineage>
        <taxon>Eukaryota</taxon>
        <taxon>Fungi</taxon>
        <taxon>Dikarya</taxon>
        <taxon>Ascomycota</taxon>
        <taxon>Taphrinomycotina</taxon>
        <taxon>Schizosaccharomycetes</taxon>
        <taxon>Schizosaccharomycetales</taxon>
        <taxon>Schizosaccharomycetaceae</taxon>
        <taxon>Schizosaccharomyces</taxon>
    </lineage>
</organism>
<feature type="chain" id="PRO_0000316597" description="Mechanosensitive ion channel protein Msy2">
    <location>
        <begin position="1"/>
        <end position="840"/>
    </location>
</feature>
<feature type="topological domain" description="Cytoplasmic" evidence="2">
    <location>
        <begin position="1"/>
        <end position="68"/>
    </location>
</feature>
<feature type="transmembrane region" description="Helical" evidence="2">
    <location>
        <begin position="69"/>
        <end position="89"/>
    </location>
</feature>
<feature type="topological domain" description="Lumenal" evidence="2">
    <location>
        <begin position="90"/>
        <end position="100"/>
    </location>
</feature>
<feature type="transmembrane region" description="Helical" evidence="2">
    <location>
        <begin position="101"/>
        <end position="121"/>
    </location>
</feature>
<feature type="topological domain" description="Cytoplasmic" evidence="2">
    <location>
        <begin position="122"/>
        <end position="126"/>
    </location>
</feature>
<feature type="transmembrane region" description="Helical" evidence="2">
    <location>
        <begin position="127"/>
        <end position="147"/>
    </location>
</feature>
<feature type="topological domain" description="Lumenal" evidence="2">
    <location>
        <begin position="148"/>
        <end position="151"/>
    </location>
</feature>
<feature type="transmembrane region" description="Helical" evidence="2">
    <location>
        <begin position="152"/>
        <end position="172"/>
    </location>
</feature>
<feature type="topological domain" description="Cytoplasmic" evidence="2">
    <location>
        <begin position="173"/>
        <end position="225"/>
    </location>
</feature>
<feature type="transmembrane region" description="Helical" evidence="2">
    <location>
        <begin position="226"/>
        <end position="246"/>
    </location>
</feature>
<feature type="topological domain" description="Lumenal" evidence="2">
    <location>
        <begin position="247"/>
        <end position="449"/>
    </location>
</feature>
<feature type="transmembrane region" description="Helical" evidence="2">
    <location>
        <begin position="450"/>
        <end position="491"/>
    </location>
</feature>
<feature type="topological domain" description="Cytoplasmic" evidence="2">
    <location>
        <begin position="492"/>
        <end position="840"/>
    </location>
</feature>
<feature type="domain" description="EF-hand" evidence="3">
    <location>
        <begin position="392"/>
        <end position="427"/>
    </location>
</feature>
<feature type="region of interest" description="Disordered" evidence="4">
    <location>
        <begin position="677"/>
        <end position="730"/>
    </location>
</feature>
<feature type="region of interest" description="Disordered" evidence="4">
    <location>
        <begin position="775"/>
        <end position="819"/>
    </location>
</feature>
<feature type="compositionally biased region" description="Low complexity" evidence="4">
    <location>
        <begin position="688"/>
        <end position="700"/>
    </location>
</feature>
<feature type="compositionally biased region" description="Basic and acidic residues" evidence="4">
    <location>
        <begin position="708"/>
        <end position="730"/>
    </location>
</feature>
<feature type="compositionally biased region" description="Low complexity" evidence="4">
    <location>
        <begin position="776"/>
        <end position="819"/>
    </location>
</feature>
<feature type="mutagenesis site" description="Viability does not decrease in a calcium-dependent manner; when associated with A-395; A-396; A-399; A-405; A-407; A-415; A-416; A-418; A-423 and A-427." evidence="5">
    <original>D</original>
    <variation>A</variation>
    <location>
        <position position="394"/>
    </location>
</feature>
<feature type="mutagenesis site" description="Viability does not decrease in a calcium-dependent manner; when associated with A-394; A-396; A-399; A-405; A-407; A-415; A-416; A-418; A-423 and A-427." evidence="5">
    <original>D</original>
    <variation>A</variation>
    <location>
        <position position="395"/>
    </location>
</feature>
<feature type="mutagenesis site" description="Viability does not decrease in a calcium-dependent manner; when associated with A-394; A-395; A-399; A-405; A-407; A-415; A-416; A-418; A-423 and A-427." evidence="5">
    <original>E</original>
    <variation>A</variation>
    <location>
        <position position="396"/>
    </location>
</feature>
<feature type="mutagenesis site" description="Viability does not decrease in a calcium-dependent manner; when associated with A-394; A-395; A-396; A-405; A-407; A-415; A-416; A-418; A-423 and A-427." evidence="5">
    <original>D</original>
    <variation>A</variation>
    <location>
        <position position="399"/>
    </location>
</feature>
<feature type="mutagenesis site" description="Viability does not decrease in a calcium-dependent manner; when associated with A-394; A-395; A-396; A-399; A-407; A-415; A-416; A-418; A-423 and A-427." evidence="5">
    <original>D</original>
    <variation>A</variation>
    <location>
        <position position="405"/>
    </location>
</feature>
<feature type="mutagenesis site" description="Viability does not decrease in a calcium-dependent manner; when associated with A-394; A-395; A-396; A-399; A-405; A-415; A-416; A-418; A-423 and A-427." evidence="5">
    <original>D</original>
    <variation>A</variation>
    <location>
        <position position="407"/>
    </location>
</feature>
<feature type="mutagenesis site" description="Viability does not decrease in a calcium-dependent manner; when associated with A-394; A-395; A-396; A-399; A-405; A-407; A-416; A-418; A-423 and A-427." evidence="5">
    <original>D</original>
    <variation>A</variation>
    <location>
        <position position="415"/>
    </location>
</feature>
<feature type="mutagenesis site" description="Viability does not decrease in a calcium-dependent manner; when associated with A-394; A-395; A-396; A-399; A-405; A-407; A-415; A-418; A-423 and A-427." evidence="5">
    <original>E</original>
    <variation>A</variation>
    <location>
        <position position="416"/>
    </location>
</feature>
<feature type="mutagenesis site" description="Viability does not decrease in a calcium-dependent manner; when associated with A-394; A-395; A-396; A-399; A-405; A-407; A-415; A-416; A-423 and A-427." evidence="5">
    <original>E</original>
    <variation>A</variation>
    <location>
        <position position="418"/>
    </location>
</feature>
<feature type="mutagenesis site" description="Viability does not decrease in a calcium-dependent manner; when associated with A-394; A-395; A-396; A-399; A-405; A-407; A-415; A-416; A-418 and A-427." evidence="5">
    <original>E</original>
    <variation>A</variation>
    <location>
        <position position="423"/>
    </location>
</feature>
<feature type="mutagenesis site" description="Viability does not decrease in a calcium-dependent manner; when associated with A-394; A-395; A-396; A-399; A-405; A-407; A-415; A-416; A-418 and A-423." evidence="5">
    <original>E</original>
    <variation>A</variation>
    <location>
        <position position="427"/>
    </location>
</feature>
<reference key="1">
    <citation type="journal article" date="2002" name="Nature">
        <title>The genome sequence of Schizosaccharomyces pombe.</title>
        <authorList>
            <person name="Wood V."/>
            <person name="Gwilliam R."/>
            <person name="Rajandream M.A."/>
            <person name="Lyne M.H."/>
            <person name="Lyne R."/>
            <person name="Stewart A."/>
            <person name="Sgouros J.G."/>
            <person name="Peat N."/>
            <person name="Hayles J."/>
            <person name="Baker S.G."/>
            <person name="Basham D."/>
            <person name="Bowman S."/>
            <person name="Brooks K."/>
            <person name="Brown D."/>
            <person name="Brown S."/>
            <person name="Chillingworth T."/>
            <person name="Churcher C.M."/>
            <person name="Collins M."/>
            <person name="Connor R."/>
            <person name="Cronin A."/>
            <person name="Davis P."/>
            <person name="Feltwell T."/>
            <person name="Fraser A."/>
            <person name="Gentles S."/>
            <person name="Goble A."/>
            <person name="Hamlin N."/>
            <person name="Harris D.E."/>
            <person name="Hidalgo J."/>
            <person name="Hodgson G."/>
            <person name="Holroyd S."/>
            <person name="Hornsby T."/>
            <person name="Howarth S."/>
            <person name="Huckle E.J."/>
            <person name="Hunt S."/>
            <person name="Jagels K."/>
            <person name="James K.D."/>
            <person name="Jones L."/>
            <person name="Jones M."/>
            <person name="Leather S."/>
            <person name="McDonald S."/>
            <person name="McLean J."/>
            <person name="Mooney P."/>
            <person name="Moule S."/>
            <person name="Mungall K.L."/>
            <person name="Murphy L.D."/>
            <person name="Niblett D."/>
            <person name="Odell C."/>
            <person name="Oliver K."/>
            <person name="O'Neil S."/>
            <person name="Pearson D."/>
            <person name="Quail M.A."/>
            <person name="Rabbinowitsch E."/>
            <person name="Rutherford K.M."/>
            <person name="Rutter S."/>
            <person name="Saunders D."/>
            <person name="Seeger K."/>
            <person name="Sharp S."/>
            <person name="Skelton J."/>
            <person name="Simmonds M.N."/>
            <person name="Squares R."/>
            <person name="Squares S."/>
            <person name="Stevens K."/>
            <person name="Taylor K."/>
            <person name="Taylor R.G."/>
            <person name="Tivey A."/>
            <person name="Walsh S.V."/>
            <person name="Warren T."/>
            <person name="Whitehead S."/>
            <person name="Woodward J.R."/>
            <person name="Volckaert G."/>
            <person name="Aert R."/>
            <person name="Robben J."/>
            <person name="Grymonprez B."/>
            <person name="Weltjens I."/>
            <person name="Vanstreels E."/>
            <person name="Rieger M."/>
            <person name="Schaefer M."/>
            <person name="Mueller-Auer S."/>
            <person name="Gabel C."/>
            <person name="Fuchs M."/>
            <person name="Duesterhoeft A."/>
            <person name="Fritzc C."/>
            <person name="Holzer E."/>
            <person name="Moestl D."/>
            <person name="Hilbert H."/>
            <person name="Borzym K."/>
            <person name="Langer I."/>
            <person name="Beck A."/>
            <person name="Lehrach H."/>
            <person name="Reinhardt R."/>
            <person name="Pohl T.M."/>
            <person name="Eger P."/>
            <person name="Zimmermann W."/>
            <person name="Wedler H."/>
            <person name="Wambutt R."/>
            <person name="Purnelle B."/>
            <person name="Goffeau A."/>
            <person name="Cadieu E."/>
            <person name="Dreano S."/>
            <person name="Gloux S."/>
            <person name="Lelaure V."/>
            <person name="Mottier S."/>
            <person name="Galibert F."/>
            <person name="Aves S.J."/>
            <person name="Xiang Z."/>
            <person name="Hunt C."/>
            <person name="Moore K."/>
            <person name="Hurst S.M."/>
            <person name="Lucas M."/>
            <person name="Rochet M."/>
            <person name="Gaillardin C."/>
            <person name="Tallada V.A."/>
            <person name="Garzon A."/>
            <person name="Thode G."/>
            <person name="Daga R.R."/>
            <person name="Cruzado L."/>
            <person name="Jimenez J."/>
            <person name="Sanchez M."/>
            <person name="del Rey F."/>
            <person name="Benito J."/>
            <person name="Dominguez A."/>
            <person name="Revuelta J.L."/>
            <person name="Moreno S."/>
            <person name="Armstrong J."/>
            <person name="Forsburg S.L."/>
            <person name="Cerutti L."/>
            <person name="Lowe T."/>
            <person name="McCombie W.R."/>
            <person name="Paulsen I."/>
            <person name="Potashkin J."/>
            <person name="Shpakovski G.V."/>
            <person name="Ussery D."/>
            <person name="Barrell B.G."/>
            <person name="Nurse P."/>
        </authorList>
    </citation>
    <scope>NUCLEOTIDE SEQUENCE [LARGE SCALE GENOMIC DNA]</scope>
    <source>
        <strain>972 / ATCC 24843</strain>
    </source>
</reference>
<reference key="2">
    <citation type="journal article" date="2012" name="Nat. Commun.">
        <title>Organellar mechanosensitive channels in fission yeast regulate the hypo-osmotic shock response.</title>
        <authorList>
            <person name="Nakayama Y."/>
            <person name="Yoshimura K."/>
            <person name="Iida H."/>
        </authorList>
    </citation>
    <scope>FUNCTION</scope>
    <scope>SUBCELLULAR LOCATION</scope>
    <scope>INDUCTION</scope>
    <scope>DISRUPTION PHENOTYPE</scope>
    <scope>MUTAGENESIS OF ASP-394; ASP-395; GLU-396; ASP-399; ASP-405; ASP-407; ASP-415; GLU-416; GLU-418; GLU-423 AND GLU-427</scope>
</reference>
<reference key="3">
    <citation type="journal article" date="2014" name="FEMS Yeast Res.">
        <title>Mechanosensitive channels Msy1 and Msy2 are required for maintaining organelle integrity upon hypoosmotic shock in Schizosaccharomyces pombe.</title>
        <authorList>
            <person name="Nakayama Y."/>
            <person name="Hirata A."/>
            <person name="Iida H."/>
        </authorList>
    </citation>
    <scope>FUNCTION</scope>
</reference>
<dbReference type="EMBL" id="CU329670">
    <property type="protein sequence ID" value="CAB16377.1"/>
    <property type="molecule type" value="Genomic_DNA"/>
</dbReference>
<dbReference type="PIR" id="T38528">
    <property type="entry name" value="T38528"/>
</dbReference>
<dbReference type="RefSeq" id="NP_594520.1">
    <property type="nucleotide sequence ID" value="NM_001019949.2"/>
</dbReference>
<dbReference type="SMR" id="O14050"/>
<dbReference type="BioGRID" id="277930">
    <property type="interactions" value="29"/>
</dbReference>
<dbReference type="FunCoup" id="O14050">
    <property type="interactions" value="4"/>
</dbReference>
<dbReference type="STRING" id="284812.O14050"/>
<dbReference type="TCDB" id="1.A.23.4.19">
    <property type="family name" value="the small conductance mechanosensitive ion channel (mscs) family"/>
</dbReference>
<dbReference type="iPTMnet" id="O14050"/>
<dbReference type="PaxDb" id="4896-SPAC2C4.17c.1"/>
<dbReference type="EnsemblFungi" id="SPAC2C4.17c.1">
    <property type="protein sequence ID" value="SPAC2C4.17c.1:pep"/>
    <property type="gene ID" value="SPAC2C4.17c"/>
</dbReference>
<dbReference type="GeneID" id="2541425"/>
<dbReference type="KEGG" id="spo:2541425"/>
<dbReference type="PomBase" id="SPAC2C4.17c">
    <property type="gene designation" value="msy2"/>
</dbReference>
<dbReference type="VEuPathDB" id="FungiDB:SPAC2C4.17c"/>
<dbReference type="eggNOG" id="KOG4629">
    <property type="taxonomic scope" value="Eukaryota"/>
</dbReference>
<dbReference type="HOGENOM" id="CLU_018836_0_0_1"/>
<dbReference type="InParanoid" id="O14050"/>
<dbReference type="OMA" id="HSMHDVD"/>
<dbReference type="PhylomeDB" id="O14050"/>
<dbReference type="PRO" id="PR:O14050"/>
<dbReference type="Proteomes" id="UP000002485">
    <property type="component" value="Chromosome I"/>
</dbReference>
<dbReference type="GO" id="GO:0032541">
    <property type="term" value="C:cortical endoplasmic reticulum"/>
    <property type="evidence" value="ECO:0000314"/>
    <property type="project" value="PomBase"/>
</dbReference>
<dbReference type="GO" id="GO:0005789">
    <property type="term" value="C:endoplasmic reticulum membrane"/>
    <property type="evidence" value="ECO:0007669"/>
    <property type="project" value="UniProtKB-SubCell"/>
</dbReference>
<dbReference type="GO" id="GO:0016020">
    <property type="term" value="C:membrane"/>
    <property type="evidence" value="ECO:0000255"/>
    <property type="project" value="PomBase"/>
</dbReference>
<dbReference type="GO" id="GO:0005262">
    <property type="term" value="F:calcium channel activity"/>
    <property type="evidence" value="ECO:0000318"/>
    <property type="project" value="GO_Central"/>
</dbReference>
<dbReference type="GO" id="GO:0005509">
    <property type="term" value="F:calcium ion binding"/>
    <property type="evidence" value="ECO:0007669"/>
    <property type="project" value="InterPro"/>
</dbReference>
<dbReference type="GO" id="GO:0008381">
    <property type="term" value="F:mechanosensitive monoatomic ion channel activity"/>
    <property type="evidence" value="ECO:0000255"/>
    <property type="project" value="PomBase"/>
</dbReference>
<dbReference type="GO" id="GO:0070588">
    <property type="term" value="P:calcium ion transmembrane transport"/>
    <property type="evidence" value="ECO:0000318"/>
    <property type="project" value="GO_Central"/>
</dbReference>
<dbReference type="GO" id="GO:0006884">
    <property type="term" value="P:cell volume homeostasis"/>
    <property type="evidence" value="ECO:0000315"/>
    <property type="project" value="PomBase"/>
</dbReference>
<dbReference type="GO" id="GO:0006874">
    <property type="term" value="P:intracellular calcium ion homeostasis"/>
    <property type="evidence" value="ECO:0000315"/>
    <property type="project" value="PomBase"/>
</dbReference>
<dbReference type="Gene3D" id="2.30.30.60">
    <property type="match status" value="1"/>
</dbReference>
<dbReference type="InterPro" id="IPR002048">
    <property type="entry name" value="EF_hand_dom"/>
</dbReference>
<dbReference type="InterPro" id="IPR010920">
    <property type="entry name" value="LSM_dom_sf"/>
</dbReference>
<dbReference type="InterPro" id="IPR049278">
    <property type="entry name" value="MS_channel_C"/>
</dbReference>
<dbReference type="InterPro" id="IPR016688">
    <property type="entry name" value="MscS-like_plants/fungi"/>
</dbReference>
<dbReference type="InterPro" id="IPR023408">
    <property type="entry name" value="MscS_beta-dom_sf"/>
</dbReference>
<dbReference type="InterPro" id="IPR006685">
    <property type="entry name" value="MscS_channel_2nd"/>
</dbReference>
<dbReference type="PANTHER" id="PTHR31323">
    <property type="entry name" value="MECHANOSENSITIVE ION CHANNEL PROTEIN MSY2"/>
    <property type="match status" value="1"/>
</dbReference>
<dbReference type="PANTHER" id="PTHR31323:SF14">
    <property type="entry name" value="MECHANOSENSITIVE ION CHANNEL PROTEIN MSY2"/>
    <property type="match status" value="1"/>
</dbReference>
<dbReference type="Pfam" id="PF00924">
    <property type="entry name" value="MS_channel_2nd"/>
    <property type="match status" value="1"/>
</dbReference>
<dbReference type="Pfam" id="PF21082">
    <property type="entry name" value="MS_channel_3rd"/>
    <property type="match status" value="1"/>
</dbReference>
<dbReference type="PIRSF" id="PIRSF017209">
    <property type="entry name" value="Memb_At2g17000_prd"/>
    <property type="match status" value="1"/>
</dbReference>
<dbReference type="SUPFAM" id="SSF50182">
    <property type="entry name" value="Sm-like ribonucleoproteins"/>
    <property type="match status" value="1"/>
</dbReference>
<dbReference type="PROSITE" id="PS50222">
    <property type="entry name" value="EF_HAND_2"/>
    <property type="match status" value="1"/>
</dbReference>
<comment type="function">
    <text evidence="5 6">Regulates intracellular calcium levels and cell volume for survival in response to hypo-osmotic shock (PubMed:22910366). Involved in maintaining vacuole integrity and protecting the nuclear envelope upon hypo-osmotic shock (PubMed:25041276).</text>
</comment>
<comment type="subcellular location">
    <subcellularLocation>
        <location evidence="5">Endoplasmic reticulum membrane</location>
        <topology evidence="8">Multi-pass membrane protein</topology>
    </subcellularLocation>
    <text evidence="5">Cortical endoplasmic reticulum.</text>
</comment>
<comment type="induction">
    <text evidence="5">Up-regulated by both hyper- and hypo-osmotic shocks.</text>
</comment>
<comment type="domain">
    <text evidence="1">EF-hand domain is involved in the detection of calcium concentration.</text>
</comment>
<comment type="disruption phenotype">
    <text evidence="5">Upon hypo-osmotic shock, cells display excessive increase in cell volume compared to wild-type and undergo cell death.</text>
</comment>
<comment type="similarity">
    <text evidence="8">Belongs to the MscS (TC 1.A.23) family.</text>
</comment>
<proteinExistence type="evidence at protein level"/>
<evidence type="ECO:0000250" key="1">
    <source>
        <dbReference type="UniProtKB" id="O74839"/>
    </source>
</evidence>
<evidence type="ECO:0000255" key="2"/>
<evidence type="ECO:0000255" key="3">
    <source>
        <dbReference type="PROSITE-ProRule" id="PRU00448"/>
    </source>
</evidence>
<evidence type="ECO:0000256" key="4">
    <source>
        <dbReference type="SAM" id="MobiDB-lite"/>
    </source>
</evidence>
<evidence type="ECO:0000269" key="5">
    <source>
    </source>
</evidence>
<evidence type="ECO:0000269" key="6">
    <source>
    </source>
</evidence>
<evidence type="ECO:0000303" key="7">
    <source>
    </source>
</evidence>
<evidence type="ECO:0000305" key="8"/>
<evidence type="ECO:0000312" key="9">
    <source>
        <dbReference type="PomBase" id="SPAC2C4.17c"/>
    </source>
</evidence>
<gene>
    <name evidence="7" type="primary">msy2</name>
    <name evidence="9" type="ORF">SPAC2C4.17c</name>
</gene>
<accession>O14050</accession>
<keyword id="KW-0256">Endoplasmic reticulum</keyword>
<keyword id="KW-0472">Membrane</keyword>
<keyword id="KW-1185">Reference proteome</keyword>
<keyword id="KW-0346">Stress response</keyword>
<keyword id="KW-0812">Transmembrane</keyword>
<keyword id="KW-1133">Transmembrane helix</keyword>
<protein>
    <recommendedName>
        <fullName evidence="7">Mechanosensitive ion channel protein Msy2</fullName>
    </recommendedName>
</protein>
<name>MSY2_SCHPO</name>
<sequence length="840" mass="94644">MNEHRREPHRRSGYQDDSAFTNTEKLVDELDHNVEPEQLLEKNRTDFKLMYVIVKFYRWFNNLSFITRWITIWFPLAGALVIPLAVGVSPYPNAKLGGVRIFWIFVWLEVAWGGFWVSRVIARLLPYILYPLMGILPFTMYKYTVILTALEMPLAIFFCSIVCVCTFSPIMIGKGNFTSTTVTTTTSATATPTASASSNAVESVFVTKTAASVPSWIKVITKILGAAVVTSIVLLLEKIFLHFIGFHYHEVQYQYRITDNKRNTAVLAKLLTAALDAPYHDSPRVRRQDYLLGLIDTRSMSESKGSGNGKLRKVKKISKNAKRIFSKTRNAISTAFTDMLGKHAKDLTPEQEFILETIRSKKKCLALARKIWYSLVPEGEDCFQKEDLIGLIPDDEINDIFHILDNDYSRTVTLDEMEQFTREISIEFRSISSSLRDVDLALGKLDRVGLGVVGIIAVLTFISFLDTSFATILAAFGTTLLSLSFVFSTSAQELMSSIIFLFSKHPFDISDVVIVNNIKYEVVSLSLLFTVFRTMGGSTVQAPNSLLNTLFIENLRRSQPQSETITIVSPFATDFKQLERLRDLLLTFVKENERDFRPIIDLNVSDFSTLDSLKFTVTYYYKSNWQNVSLQCVRRNKFMCALKNAIATTNLPAVADPVRGSPDYPFVIEQYNLERPEYSKTASRPQFSDISSTASSNSLSNKPGFAHSESRNYHTHDEDNSSDDNHKREDRGHLPAQYLRQSVATWQIPNLISAIEAYDSQNESSQENATYTVVESNGNANGDNTATNSQGATDNGQTTTNTTQNNVDNTQATTDNTQANTDNMQVAIDYSQNMDGQIQY</sequence>